<gene>
    <name evidence="1" type="primary">ndhH</name>
</gene>
<comment type="function">
    <text evidence="1">NDH shuttles electrons from NAD(P)H:plastoquinone, via FMN and iron-sulfur (Fe-S) centers, to quinones in the photosynthetic chain and possibly in a chloroplast respiratory chain. The immediate electron acceptor for the enzyme in this species is believed to be plastoquinone. Couples the redox reaction to proton translocation, and thus conserves the redox energy in a proton gradient.</text>
</comment>
<comment type="catalytic activity">
    <reaction evidence="1">
        <text>a plastoquinone + NADH + (n+1) H(+)(in) = a plastoquinol + NAD(+) + n H(+)(out)</text>
        <dbReference type="Rhea" id="RHEA:42608"/>
        <dbReference type="Rhea" id="RHEA-COMP:9561"/>
        <dbReference type="Rhea" id="RHEA-COMP:9562"/>
        <dbReference type="ChEBI" id="CHEBI:15378"/>
        <dbReference type="ChEBI" id="CHEBI:17757"/>
        <dbReference type="ChEBI" id="CHEBI:57540"/>
        <dbReference type="ChEBI" id="CHEBI:57945"/>
        <dbReference type="ChEBI" id="CHEBI:62192"/>
    </reaction>
</comment>
<comment type="catalytic activity">
    <reaction evidence="1">
        <text>a plastoquinone + NADPH + (n+1) H(+)(in) = a plastoquinol + NADP(+) + n H(+)(out)</text>
        <dbReference type="Rhea" id="RHEA:42612"/>
        <dbReference type="Rhea" id="RHEA-COMP:9561"/>
        <dbReference type="Rhea" id="RHEA-COMP:9562"/>
        <dbReference type="ChEBI" id="CHEBI:15378"/>
        <dbReference type="ChEBI" id="CHEBI:17757"/>
        <dbReference type="ChEBI" id="CHEBI:57783"/>
        <dbReference type="ChEBI" id="CHEBI:58349"/>
        <dbReference type="ChEBI" id="CHEBI:62192"/>
    </reaction>
</comment>
<comment type="subunit">
    <text evidence="1">NDH is composed of at least 16 different subunits, 5 of which are encoded in the nucleus.</text>
</comment>
<comment type="subcellular location">
    <subcellularLocation>
        <location evidence="1">Plastid</location>
        <location evidence="1">Chloroplast thylakoid membrane</location>
        <topology evidence="1">Peripheral membrane protein</topology>
        <orientation evidence="1">Stromal side</orientation>
    </subcellularLocation>
</comment>
<comment type="similarity">
    <text evidence="1">Belongs to the complex I 49 kDa subunit family.</text>
</comment>
<name>NDHH_OENGL</name>
<evidence type="ECO:0000255" key="1">
    <source>
        <dbReference type="HAMAP-Rule" id="MF_01358"/>
    </source>
</evidence>
<reference key="1">
    <citation type="journal article" date="2008" name="Nucleic Acids Res.">
        <title>The complete nucleotide sequences of the five genetically distinct plastid genomes of Oenothera, subsection Oenothera: I. Sequence evaluation and plastome evolution.</title>
        <authorList>
            <person name="Greiner S."/>
            <person name="Wang X."/>
            <person name="Rauwolf U."/>
            <person name="Silber M.V."/>
            <person name="Mayer K."/>
            <person name="Meurer J."/>
            <person name="Haberer G."/>
            <person name="Herrmann R.G."/>
        </authorList>
    </citation>
    <scope>NUCLEOTIDE SEQUENCE [LARGE SCALE GENOMIC DNA]</scope>
    <source>
        <strain>cv. Rr-lamarckiana Sweden</strain>
    </source>
</reference>
<feature type="chain" id="PRO_0000358014" description="NAD(P)H-quinone oxidoreductase subunit H, chloroplastic">
    <location>
        <begin position="1"/>
        <end position="393"/>
    </location>
</feature>
<protein>
    <recommendedName>
        <fullName evidence="1">NAD(P)H-quinone oxidoreductase subunit H, chloroplastic</fullName>
        <ecNumber evidence="1">7.1.1.-</ecNumber>
    </recommendedName>
    <alternativeName>
        <fullName>NAD(P)H dehydrogenase subunit H</fullName>
    </alternativeName>
    <alternativeName>
        <fullName evidence="1">NADH-plastoquinone oxidoreductase 49 kDa subunit</fullName>
    </alternativeName>
    <alternativeName>
        <fullName evidence="1">NADH-plastoquinone oxidoreductase subunit H</fullName>
    </alternativeName>
</protein>
<proteinExistence type="inferred from homology"/>
<accession>B0Z599</accession>
<dbReference type="EC" id="7.1.1.-" evidence="1"/>
<dbReference type="EMBL" id="EU262890">
    <property type="protein sequence ID" value="ABX10092.1"/>
    <property type="molecule type" value="Genomic_DNA"/>
</dbReference>
<dbReference type="RefSeq" id="YP_001687338.1">
    <property type="nucleotide sequence ID" value="NC_010360.2"/>
</dbReference>
<dbReference type="SMR" id="B0Z599"/>
<dbReference type="GeneID" id="5955238"/>
<dbReference type="GO" id="GO:0009535">
    <property type="term" value="C:chloroplast thylakoid membrane"/>
    <property type="evidence" value="ECO:0007669"/>
    <property type="project" value="UniProtKB-SubCell"/>
</dbReference>
<dbReference type="GO" id="GO:0051287">
    <property type="term" value="F:NAD binding"/>
    <property type="evidence" value="ECO:0007669"/>
    <property type="project" value="InterPro"/>
</dbReference>
<dbReference type="GO" id="GO:0016655">
    <property type="term" value="F:oxidoreductase activity, acting on NAD(P)H, quinone or similar compound as acceptor"/>
    <property type="evidence" value="ECO:0007669"/>
    <property type="project" value="UniProtKB-UniRule"/>
</dbReference>
<dbReference type="GO" id="GO:0048038">
    <property type="term" value="F:quinone binding"/>
    <property type="evidence" value="ECO:0007669"/>
    <property type="project" value="UniProtKB-KW"/>
</dbReference>
<dbReference type="GO" id="GO:0019684">
    <property type="term" value="P:photosynthesis, light reaction"/>
    <property type="evidence" value="ECO:0007669"/>
    <property type="project" value="UniProtKB-UniRule"/>
</dbReference>
<dbReference type="FunFam" id="1.10.645.10:FF:000003">
    <property type="entry name" value="NAD(P)H-quinone oxidoreductase subunit H, chloroplastic"/>
    <property type="match status" value="1"/>
</dbReference>
<dbReference type="Gene3D" id="1.10.645.10">
    <property type="entry name" value="Cytochrome-c3 Hydrogenase, chain B"/>
    <property type="match status" value="1"/>
</dbReference>
<dbReference type="HAMAP" id="MF_01358">
    <property type="entry name" value="NDH1_NuoD"/>
    <property type="match status" value="1"/>
</dbReference>
<dbReference type="InterPro" id="IPR001135">
    <property type="entry name" value="NADH_Q_OxRdtase_suD"/>
</dbReference>
<dbReference type="InterPro" id="IPR014029">
    <property type="entry name" value="NADH_UbQ_OxRdtase_49kDa_CS"/>
</dbReference>
<dbReference type="InterPro" id="IPR022885">
    <property type="entry name" value="NDH1_su_D/H"/>
</dbReference>
<dbReference type="InterPro" id="IPR029014">
    <property type="entry name" value="NiFe-Hase_large"/>
</dbReference>
<dbReference type="NCBIfam" id="NF004739">
    <property type="entry name" value="PRK06075.1"/>
    <property type="match status" value="1"/>
</dbReference>
<dbReference type="NCBIfam" id="NF005649">
    <property type="entry name" value="PRK07415.1"/>
    <property type="match status" value="1"/>
</dbReference>
<dbReference type="PANTHER" id="PTHR11993:SF10">
    <property type="entry name" value="NADH DEHYDROGENASE [UBIQUINONE] IRON-SULFUR PROTEIN 2, MITOCHONDRIAL"/>
    <property type="match status" value="1"/>
</dbReference>
<dbReference type="PANTHER" id="PTHR11993">
    <property type="entry name" value="NADH-UBIQUINONE OXIDOREDUCTASE 49 KDA SUBUNIT"/>
    <property type="match status" value="1"/>
</dbReference>
<dbReference type="Pfam" id="PF00346">
    <property type="entry name" value="Complex1_49kDa"/>
    <property type="match status" value="1"/>
</dbReference>
<dbReference type="SUPFAM" id="SSF56762">
    <property type="entry name" value="HydB/Nqo4-like"/>
    <property type="match status" value="1"/>
</dbReference>
<dbReference type="PROSITE" id="PS00535">
    <property type="entry name" value="COMPLEX1_49K"/>
    <property type="match status" value="1"/>
</dbReference>
<organism>
    <name type="scientific">Oenothera glazioviana</name>
    <name type="common">Large-flowered evening primrose</name>
    <name type="synonym">Oenothera erythrosepala</name>
    <dbReference type="NCBI Taxonomy" id="482428"/>
    <lineage>
        <taxon>Eukaryota</taxon>
        <taxon>Viridiplantae</taxon>
        <taxon>Streptophyta</taxon>
        <taxon>Embryophyta</taxon>
        <taxon>Tracheophyta</taxon>
        <taxon>Spermatophyta</taxon>
        <taxon>Magnoliopsida</taxon>
        <taxon>eudicotyledons</taxon>
        <taxon>Gunneridae</taxon>
        <taxon>Pentapetalae</taxon>
        <taxon>rosids</taxon>
        <taxon>malvids</taxon>
        <taxon>Myrtales</taxon>
        <taxon>Onagraceae</taxon>
        <taxon>Onagroideae</taxon>
        <taxon>Onagreae</taxon>
        <taxon>Oenothera</taxon>
    </lineage>
</organism>
<sequence length="393" mass="45480">MNVTTTRKDLMIVNMGPHHPSMHGVLRLILTLDGEDVIDCEPILGYLHRGMEKIAENRTVIQYLPYVTRWDYLATMFTEAITINGPEQLGNIQVPKRASYIRIIMLELSRIASHLLWLGPFMADIGAQTPFFYIFRERELVYDLFEAATGMRMMHNYFRIGGVAADLPYGWIDKCLDFCDYFLTAVSEYQKLITRNPIFLERVEGVGIIGGEEAINWGLSGPMLRASGIEWDLRKVDRYECYGELDWEIRWQKEGDSLARYLVRMSEMTESIKIIQQALEGIPGGPYENLEIRCFDREKDPEWDGFEYRFISKKPSPTFELPKQELYVRVEAPKGELGIFLIGDQSGFPWRWKIRPPGFINLQILPQLVKRMKLADIMTILGSIDIIMGEVDR</sequence>
<keyword id="KW-0150">Chloroplast</keyword>
<keyword id="KW-0472">Membrane</keyword>
<keyword id="KW-0520">NAD</keyword>
<keyword id="KW-0521">NADP</keyword>
<keyword id="KW-0934">Plastid</keyword>
<keyword id="KW-0618">Plastoquinone</keyword>
<keyword id="KW-0874">Quinone</keyword>
<keyword id="KW-0793">Thylakoid</keyword>
<keyword id="KW-1278">Translocase</keyword>
<keyword id="KW-0813">Transport</keyword>
<geneLocation type="chloroplast"/>